<protein>
    <recommendedName>
        <fullName evidence="1">Photosystem II CP47 reaction center protein</fullName>
    </recommendedName>
    <alternativeName>
        <fullName evidence="1">PSII 47 kDa protein</fullName>
    </alternativeName>
    <alternativeName>
        <fullName evidence="1">Protein CP-47</fullName>
    </alternativeName>
</protein>
<accession>Q85FJ7</accession>
<accession>Q9MUD3</accession>
<name>PSBB_ADICA</name>
<reference key="1">
    <citation type="journal article" date="2003" name="DNA Res.">
        <title>Complete nucleotide sequence of the chloroplast genome from a leptosporangiate fern, Adiantum capillus-veneris L.</title>
        <authorList>
            <person name="Wolf P.G."/>
            <person name="Rowe C.A."/>
            <person name="Sinclair R.B."/>
            <person name="Hasebe M."/>
        </authorList>
    </citation>
    <scope>NUCLEOTIDE SEQUENCE [LARGE SCALE GENOMIC DNA]</scope>
</reference>
<reference key="2">
    <citation type="journal article" date="2004" name="Gene">
        <title>High levels of RNA editing in a vascular plant chloroplast genome: analysis of transcripts from the fern Adiantum capillus-veneris.</title>
        <authorList>
            <person name="Wolf P.G."/>
            <person name="Rowe C.A."/>
            <person name="Hasebe M."/>
        </authorList>
    </citation>
    <scope>NUCLEOTIDE SEQUENCE [GENOMIC DNA]</scope>
    <scope>RNA EDITING</scope>
    <source>
        <tissue>Frond</tissue>
    </source>
</reference>
<reference key="3">
    <citation type="journal article" date="2000" name="Mol. Biol. Evol.">
        <title>Error, bias, and long-branch attraction in data for two chloroplast photosystem genes in seed plants.</title>
        <authorList>
            <person name="Sanderson M.J."/>
            <person name="Wojciechowski M.F."/>
            <person name="Hu J.-M."/>
            <person name="Sher Khan T."/>
            <person name="Brady S.G."/>
        </authorList>
    </citation>
    <scope>NUCLEOTIDE SEQUENCE [GENOMIC DNA] OF 11-471</scope>
</reference>
<proteinExistence type="evidence at transcript level"/>
<sequence>MGLPWYRVHTVVLNDPGRLISVHLMHTALVSGWAGSMALYELAVFDPSDPVLDPMWRQGMFVIPFMTRIGVSKSWGGWIITGDTSTDAGIWSYEGVAAAHIILSGLLFLAAIWHWVYWDLDLFRDDRTGKPSLDLPKIFGIHLFLSGVLCFSFGAFHVTGLFGPGIWISDPYGLTGKVEPVDPAWGAEGFDPFIPGGIASHHIAAGVLGILAGLFHLSVRPPQRLYKALRMGNVETVLSSSIAAVFFAAFVVSGTMWYGSAATPIELFGPTRYQWDQGYFQQEIERRIRLGEAENLSLSQVWSKIPEKLAFYDYIGNNPAKGGLFRAGAMDNGDGIAVGWLGHALFKDREGRELFVRRMPTFFETFPVVLVDGEGVVRADVPFRRAESKYSVEQVGVTVDFFGGELDGASFSDPATVKKYARRAQLGEIFEFDRATLKSDGVFRSSPRGWFTFGHTTFALIFFFGHIWHGARTLFRDVFAGIDPDLDAQVEFGAFQKLGDPSTKKQAV</sequence>
<comment type="function">
    <text evidence="1">One of the components of the core complex of photosystem II (PSII). It binds chlorophyll and helps catalyze the primary light-induced photochemical processes of PSII. PSII is a light-driven water:plastoquinone oxidoreductase, using light energy to abstract electrons from H(2)O, generating O(2) and a proton gradient subsequently used for ATP formation.</text>
</comment>
<comment type="cofactor">
    <text evidence="1">Binds multiple chlorophylls. PSII binds additional chlorophylls, carotenoids and specific lipids.</text>
</comment>
<comment type="subunit">
    <text evidence="1">PSII is composed of 1 copy each of membrane proteins PsbA, PsbB, PsbC, PsbD, PsbE, PsbF, PsbH, PsbI, PsbJ, PsbK, PsbL, PsbM, PsbT, PsbX, PsbY, PsbZ, Psb30/Ycf12, at least 3 peripheral proteins of the oxygen-evolving complex and a large number of cofactors. It forms dimeric complexes.</text>
</comment>
<comment type="subcellular location">
    <subcellularLocation>
        <location evidence="1">Plastid</location>
        <location evidence="1">Chloroplast thylakoid membrane</location>
        <topology evidence="1">Multi-pass membrane protein</topology>
    </subcellularLocation>
</comment>
<comment type="RNA editing">
    <location>
        <position position="1" evidence="2"/>
    </location>
    <location>
        <position position="39" evidence="2"/>
    </location>
    <text>The initiator methionine is created by RNA editing.</text>
</comment>
<comment type="similarity">
    <text evidence="1">Belongs to the PsbB/PsbC family. PsbB subfamily.</text>
</comment>
<geneLocation type="chloroplast"/>
<dbReference type="EMBL" id="AY178864">
    <property type="protein sequence ID" value="AAP29416.2"/>
    <property type="molecule type" value="Genomic_DNA"/>
</dbReference>
<dbReference type="EMBL" id="AF222698">
    <property type="protein sequence ID" value="AAF72599.1"/>
    <property type="molecule type" value="Genomic_DNA"/>
</dbReference>
<dbReference type="RefSeq" id="NP_848085.2">
    <property type="nucleotide sequence ID" value="NC_004766.1"/>
</dbReference>
<dbReference type="SMR" id="Q85FJ7"/>
<dbReference type="GeneID" id="807337"/>
<dbReference type="GO" id="GO:0009535">
    <property type="term" value="C:chloroplast thylakoid membrane"/>
    <property type="evidence" value="ECO:0007669"/>
    <property type="project" value="UniProtKB-SubCell"/>
</dbReference>
<dbReference type="GO" id="GO:0009523">
    <property type="term" value="C:photosystem II"/>
    <property type="evidence" value="ECO:0007669"/>
    <property type="project" value="UniProtKB-KW"/>
</dbReference>
<dbReference type="GO" id="GO:0016168">
    <property type="term" value="F:chlorophyll binding"/>
    <property type="evidence" value="ECO:0007669"/>
    <property type="project" value="UniProtKB-UniRule"/>
</dbReference>
<dbReference type="GO" id="GO:0045156">
    <property type="term" value="F:electron transporter, transferring electrons within the cyclic electron transport pathway of photosynthesis activity"/>
    <property type="evidence" value="ECO:0007669"/>
    <property type="project" value="InterPro"/>
</dbReference>
<dbReference type="GO" id="GO:0009772">
    <property type="term" value="P:photosynthetic electron transport in photosystem II"/>
    <property type="evidence" value="ECO:0007669"/>
    <property type="project" value="InterPro"/>
</dbReference>
<dbReference type="FunFam" id="3.10.680.10:FF:000001">
    <property type="entry name" value="Photosystem II CP47 reaction center protein"/>
    <property type="match status" value="1"/>
</dbReference>
<dbReference type="Gene3D" id="3.10.680.10">
    <property type="entry name" value="Photosystem II CP47 reaction center protein"/>
    <property type="match status" value="1"/>
</dbReference>
<dbReference type="HAMAP" id="MF_01495">
    <property type="entry name" value="PSII_PsbB_CP47"/>
    <property type="match status" value="1"/>
</dbReference>
<dbReference type="InterPro" id="IPR000932">
    <property type="entry name" value="PS_antenna-like"/>
</dbReference>
<dbReference type="InterPro" id="IPR036001">
    <property type="entry name" value="PS_II_antenna-like_sf"/>
</dbReference>
<dbReference type="InterPro" id="IPR017486">
    <property type="entry name" value="PSII_PsbB"/>
</dbReference>
<dbReference type="NCBIfam" id="TIGR03039">
    <property type="entry name" value="PS_II_CP47"/>
    <property type="match status" value="1"/>
</dbReference>
<dbReference type="Pfam" id="PF00421">
    <property type="entry name" value="PSII"/>
    <property type="match status" value="1"/>
</dbReference>
<dbReference type="SUPFAM" id="SSF161077">
    <property type="entry name" value="Photosystem II antenna protein-like"/>
    <property type="match status" value="1"/>
</dbReference>
<organism>
    <name type="scientific">Adiantum capillus-veneris</name>
    <name type="common">Maidenhair fern</name>
    <dbReference type="NCBI Taxonomy" id="13818"/>
    <lineage>
        <taxon>Eukaryota</taxon>
        <taxon>Viridiplantae</taxon>
        <taxon>Streptophyta</taxon>
        <taxon>Embryophyta</taxon>
        <taxon>Tracheophyta</taxon>
        <taxon>Polypodiopsida</taxon>
        <taxon>Polypodiidae</taxon>
        <taxon>Polypodiales</taxon>
        <taxon>Pteridineae</taxon>
        <taxon>Pteridaceae</taxon>
        <taxon>Vittarioideae</taxon>
        <taxon>Adiantum</taxon>
    </lineage>
</organism>
<feature type="chain" id="PRO_0000077474" description="Photosystem II CP47 reaction center protein">
    <location>
        <begin position="1"/>
        <end position="508"/>
    </location>
</feature>
<feature type="transmembrane region" description="Helical" evidence="1">
    <location>
        <begin position="21"/>
        <end position="36"/>
    </location>
</feature>
<feature type="transmembrane region" description="Helical" evidence="1">
    <location>
        <begin position="101"/>
        <end position="115"/>
    </location>
</feature>
<feature type="transmembrane region" description="Helical" evidence="1">
    <location>
        <begin position="140"/>
        <end position="156"/>
    </location>
</feature>
<feature type="transmembrane region" description="Helical" evidence="1">
    <location>
        <begin position="203"/>
        <end position="218"/>
    </location>
</feature>
<feature type="transmembrane region" description="Helical" evidence="1">
    <location>
        <begin position="237"/>
        <end position="252"/>
    </location>
</feature>
<feature type="transmembrane region" description="Helical" evidence="1">
    <location>
        <begin position="457"/>
        <end position="472"/>
    </location>
</feature>
<keyword id="KW-0148">Chlorophyll</keyword>
<keyword id="KW-0150">Chloroplast</keyword>
<keyword id="KW-0157">Chromophore</keyword>
<keyword id="KW-0472">Membrane</keyword>
<keyword id="KW-0602">Photosynthesis</keyword>
<keyword id="KW-0604">Photosystem II</keyword>
<keyword id="KW-0934">Plastid</keyword>
<keyword id="KW-0691">RNA editing</keyword>
<keyword id="KW-0793">Thylakoid</keyword>
<keyword id="KW-0812">Transmembrane</keyword>
<keyword id="KW-1133">Transmembrane helix</keyword>
<gene>
    <name evidence="1" type="primary">psbB</name>
</gene>
<evidence type="ECO:0000255" key="1">
    <source>
        <dbReference type="HAMAP-Rule" id="MF_01495"/>
    </source>
</evidence>
<evidence type="ECO:0000269" key="2">
    <source>
    </source>
</evidence>